<protein>
    <recommendedName>
        <fullName>5-hydroxytryptamine receptor 1B</fullName>
        <shortName>5-HT-1B</shortName>
        <shortName>5-HT1B</shortName>
    </recommendedName>
    <alternativeName>
        <fullName>Serotonin receptor 1B</fullName>
    </alternativeName>
</protein>
<sequence length="389" mass="43372">MEETNTHCAPPPPAGSQTGVSQANLSSAPPNCSTEGYIYQDSIALPWKVLLILVLALFTLATTLSNAFVIATVYRTRKLHTPANYLIASLAVTDLLVSILVMPISTMYTVTGRWTLGQVVCDFWLSSDITCCTASILHLCVIALDRYWAITDAVEYSAKRTPKRAAVMIALVWVFSISISLPPFFWRQAKAEEEVSDCRVNTDHMLYTVYSTVGAFYFPTLLLIALYGRIYVEARSRILKQTPNRTGKRLTRAQLITDSPGSTSSVTSVNSRAPDVPSESGSPVYVNQVKVRVSDALLEKKKLMAARERKATKTLGIILGAFIVCWLPFFIISLVMPICKDACWFHLAIFDFFTWLGYLNSLINPIIYTMSNEDFKQAFHKLIRFKCTG</sequence>
<accession>Q588Y6</accession>
<organism>
    <name type="scientific">Felis catus</name>
    <name type="common">Cat</name>
    <name type="synonym">Felis silvestris catus</name>
    <dbReference type="NCBI Taxonomy" id="9685"/>
    <lineage>
        <taxon>Eukaryota</taxon>
        <taxon>Metazoa</taxon>
        <taxon>Chordata</taxon>
        <taxon>Craniata</taxon>
        <taxon>Vertebrata</taxon>
        <taxon>Euteleostomi</taxon>
        <taxon>Mammalia</taxon>
        <taxon>Eutheria</taxon>
        <taxon>Laurasiatheria</taxon>
        <taxon>Carnivora</taxon>
        <taxon>Feliformia</taxon>
        <taxon>Felidae</taxon>
        <taxon>Felinae</taxon>
        <taxon>Felis</taxon>
    </lineage>
</organism>
<comment type="function">
    <text evidence="1">G-protein coupled receptor for 5-hydroxytryptamine (serotonin). Also functions as a receptor for ergot alkaloid derivatives, various anxiolytic and antidepressant drugs and other psychoactive substances, such as lysergic acid diethylamide (LSD). Ligand binding causes a conformation change that triggers signaling via guanine nucleotide-binding proteins (G proteins) and modulates the activity of downstream effectors, such as adenylate cyclase. HTR1B is coupled to G(i)/G(o) G alpha proteins and mediates inhibitory neurotransmission by inhibiting adenylate cyclase activity. Arrestin family members inhibit signaling via G proteins and mediate activation of alternative signaling pathways. Regulates the release of 5-hydroxytryptamine, dopamine and acetylcholine in the brain, and thereby affects neural activity, nociceptive processing, pain perception, mood and behavior. Besides, plays a role in vasoconstriction of cerebral arteries.</text>
</comment>
<comment type="subunit">
    <text evidence="1">Homodimer. Heterodimer with HTR1D.</text>
</comment>
<comment type="subcellular location">
    <subcellularLocation>
        <location evidence="1">Cell membrane</location>
        <topology evidence="1">Multi-pass membrane protein</topology>
    </subcellularLocation>
</comment>
<comment type="domain">
    <text evidence="1">Ligands are bound in a hydrophobic pocket formed by the transmembrane helices.</text>
</comment>
<comment type="domain">
    <text evidence="1">A residue in the 7th transmembrane region ('Thr-355' in human, 'Asn-351' in mouse and rat) is important for species-specific sensitivity to various agonists.</text>
</comment>
<comment type="PTM">
    <text evidence="1">Phosphorylated. Desensitization of the receptor may be mediated by its phosphorylation.</text>
</comment>
<comment type="PTM">
    <text evidence="1">Palmitoylated.</text>
</comment>
<comment type="similarity">
    <text evidence="4">Belongs to the G-protein coupled receptor 1 family.</text>
</comment>
<proteinExistence type="evidence at transcript level"/>
<name>5HT1B_FELCA</name>
<reference key="1">
    <citation type="submission" date="2004-09" db="EMBL/GenBank/DDBJ databases">
        <title>Felis catus 5-hydroxytryptamine (serotonin) receptor 1B (Htr1b), mRNA.</title>
        <authorList>
            <person name="Asahi D."/>
            <person name="Mori Y."/>
        </authorList>
    </citation>
    <scope>NUCLEOTIDE SEQUENCE [MRNA]</scope>
</reference>
<dbReference type="EMBL" id="AB190344">
    <property type="protein sequence ID" value="BAD93295.1"/>
    <property type="molecule type" value="mRNA"/>
</dbReference>
<dbReference type="RefSeq" id="NP_001116344.1">
    <property type="nucleotide sequence ID" value="NM_001122872.1"/>
</dbReference>
<dbReference type="RefSeq" id="XP_019685616.1">
    <property type="nucleotide sequence ID" value="XM_019830057.2"/>
</dbReference>
<dbReference type="SMR" id="Q588Y6"/>
<dbReference type="FunCoup" id="Q588Y6">
    <property type="interactions" value="60"/>
</dbReference>
<dbReference type="STRING" id="9685.ENSFCAP00000007135"/>
<dbReference type="GlyCosmos" id="Q588Y6">
    <property type="glycosylation" value="2 sites, No reported glycans"/>
</dbReference>
<dbReference type="PaxDb" id="9685-ENSFCAP00000007135"/>
<dbReference type="Ensembl" id="ENSFCAT00000007706.4">
    <property type="protein sequence ID" value="ENSFCAP00000007135.2"/>
    <property type="gene ID" value="ENSFCAG00000007703.4"/>
</dbReference>
<dbReference type="GeneID" id="100144391"/>
<dbReference type="KEGG" id="fca:100144391"/>
<dbReference type="CTD" id="3351"/>
<dbReference type="VGNC" id="VGNC:67668">
    <property type="gene designation" value="HTR1B"/>
</dbReference>
<dbReference type="eggNOG" id="KOG3656">
    <property type="taxonomic scope" value="Eukaryota"/>
</dbReference>
<dbReference type="GeneTree" id="ENSGT01010000222287"/>
<dbReference type="HOGENOM" id="CLU_009579_11_1_1"/>
<dbReference type="InParanoid" id="Q588Y6"/>
<dbReference type="OMA" id="RFRCCRA"/>
<dbReference type="OrthoDB" id="5956310at2759"/>
<dbReference type="TreeFam" id="TF316350"/>
<dbReference type="Proteomes" id="UP000011712">
    <property type="component" value="Chromosome B2"/>
</dbReference>
<dbReference type="Bgee" id="ENSFCAG00000007703">
    <property type="expression patterns" value="Expressed in embryo and 7 other cell types or tissues"/>
</dbReference>
<dbReference type="GO" id="GO:0030425">
    <property type="term" value="C:dendrite"/>
    <property type="evidence" value="ECO:0000318"/>
    <property type="project" value="GO_Central"/>
</dbReference>
<dbReference type="GO" id="GO:0005783">
    <property type="term" value="C:endoplasmic reticulum"/>
    <property type="evidence" value="ECO:0007669"/>
    <property type="project" value="Ensembl"/>
</dbReference>
<dbReference type="GO" id="GO:0098666">
    <property type="term" value="C:G protein-coupled serotonin receptor complex"/>
    <property type="evidence" value="ECO:0007669"/>
    <property type="project" value="Ensembl"/>
</dbReference>
<dbReference type="GO" id="GO:0005886">
    <property type="term" value="C:plasma membrane"/>
    <property type="evidence" value="ECO:0000250"/>
    <property type="project" value="UniProtKB"/>
</dbReference>
<dbReference type="GO" id="GO:0042734">
    <property type="term" value="C:presynaptic membrane"/>
    <property type="evidence" value="ECO:0007669"/>
    <property type="project" value="Ensembl"/>
</dbReference>
<dbReference type="GO" id="GO:0099154">
    <property type="term" value="C:serotonergic synapse"/>
    <property type="evidence" value="ECO:0007669"/>
    <property type="project" value="Ensembl"/>
</dbReference>
<dbReference type="GO" id="GO:0004993">
    <property type="term" value="F:G protein-coupled serotonin receptor activity"/>
    <property type="evidence" value="ECO:0000250"/>
    <property type="project" value="UniProtKB"/>
</dbReference>
<dbReference type="GO" id="GO:0001586">
    <property type="term" value="F:Gi/o-coupled serotonin receptor activity"/>
    <property type="evidence" value="ECO:0007669"/>
    <property type="project" value="Ensembl"/>
</dbReference>
<dbReference type="GO" id="GO:0030594">
    <property type="term" value="F:neurotransmitter receptor activity"/>
    <property type="evidence" value="ECO:0000318"/>
    <property type="project" value="GO_Central"/>
</dbReference>
<dbReference type="GO" id="GO:0051378">
    <property type="term" value="F:serotonin binding"/>
    <property type="evidence" value="ECO:0007669"/>
    <property type="project" value="Ensembl"/>
</dbReference>
<dbReference type="GO" id="GO:0099589">
    <property type="term" value="F:serotonin receptor activity"/>
    <property type="evidence" value="ECO:0007669"/>
    <property type="project" value="Ensembl"/>
</dbReference>
<dbReference type="GO" id="GO:0007198">
    <property type="term" value="P:adenylate cyclase-inhibiting serotonin receptor signaling pathway"/>
    <property type="evidence" value="ECO:0000250"/>
    <property type="project" value="UniProtKB"/>
</dbReference>
<dbReference type="GO" id="GO:0046849">
    <property type="term" value="P:bone remodeling"/>
    <property type="evidence" value="ECO:0007669"/>
    <property type="project" value="Ensembl"/>
</dbReference>
<dbReference type="GO" id="GO:0071312">
    <property type="term" value="P:cellular response to alkaloid"/>
    <property type="evidence" value="ECO:0000250"/>
    <property type="project" value="UniProtKB"/>
</dbReference>
<dbReference type="GO" id="GO:0071466">
    <property type="term" value="P:cellular response to xenobiotic stimulus"/>
    <property type="evidence" value="ECO:0000250"/>
    <property type="project" value="UniProtKB"/>
</dbReference>
<dbReference type="GO" id="GO:0007268">
    <property type="term" value="P:chemical synaptic transmission"/>
    <property type="evidence" value="ECO:0000318"/>
    <property type="project" value="GO_Central"/>
</dbReference>
<dbReference type="GO" id="GO:0007187">
    <property type="term" value="P:G protein-coupled receptor signaling pathway, coupled to cyclic nucleotide second messenger"/>
    <property type="evidence" value="ECO:0000318"/>
    <property type="project" value="GO_Central"/>
</dbReference>
<dbReference type="GO" id="GO:0014063">
    <property type="term" value="P:negative regulation of serotonin secretion"/>
    <property type="evidence" value="ECO:0000250"/>
    <property type="project" value="UniProtKB"/>
</dbReference>
<dbReference type="GO" id="GO:0007208">
    <property type="term" value="P:phospholipase C-activating serotonin receptor signaling pathway"/>
    <property type="evidence" value="ECO:0007669"/>
    <property type="project" value="Ensembl"/>
</dbReference>
<dbReference type="GO" id="GO:1904707">
    <property type="term" value="P:positive regulation of vascular associated smooth muscle cell proliferation"/>
    <property type="evidence" value="ECO:0007669"/>
    <property type="project" value="Ensembl"/>
</dbReference>
<dbReference type="GO" id="GO:0050795">
    <property type="term" value="P:regulation of behavior"/>
    <property type="evidence" value="ECO:0007669"/>
    <property type="project" value="InterPro"/>
</dbReference>
<dbReference type="GO" id="GO:0042310">
    <property type="term" value="P:vasoconstriction"/>
    <property type="evidence" value="ECO:0007669"/>
    <property type="project" value="InterPro"/>
</dbReference>
<dbReference type="CDD" id="cd15333">
    <property type="entry name" value="7tmA_5-HT1B_1D"/>
    <property type="match status" value="1"/>
</dbReference>
<dbReference type="Gene3D" id="1.20.1070.10">
    <property type="entry name" value="Rhodopsin 7-helix transmembrane proteins"/>
    <property type="match status" value="1"/>
</dbReference>
<dbReference type="InterPro" id="IPR002147">
    <property type="entry name" value="5HT1B_rcpt"/>
</dbReference>
<dbReference type="InterPro" id="IPR002231">
    <property type="entry name" value="5HT_rcpt"/>
</dbReference>
<dbReference type="InterPro" id="IPR000276">
    <property type="entry name" value="GPCR_Rhodpsn"/>
</dbReference>
<dbReference type="InterPro" id="IPR017452">
    <property type="entry name" value="GPCR_Rhodpsn_7TM"/>
</dbReference>
<dbReference type="PANTHER" id="PTHR24248:SF201">
    <property type="entry name" value="5-HYDROXYTRYPTAMINE RECEPTOR 1B"/>
    <property type="match status" value="1"/>
</dbReference>
<dbReference type="PANTHER" id="PTHR24248">
    <property type="entry name" value="ADRENERGIC RECEPTOR-RELATED G-PROTEIN COUPLED RECEPTOR"/>
    <property type="match status" value="1"/>
</dbReference>
<dbReference type="Pfam" id="PF00001">
    <property type="entry name" value="7tm_1"/>
    <property type="match status" value="1"/>
</dbReference>
<dbReference type="PRINTS" id="PR00513">
    <property type="entry name" value="5HT1BRECEPTR"/>
</dbReference>
<dbReference type="PRINTS" id="PR01101">
    <property type="entry name" value="5HTRECEPTOR"/>
</dbReference>
<dbReference type="PRINTS" id="PR00237">
    <property type="entry name" value="GPCRRHODOPSN"/>
</dbReference>
<dbReference type="SMART" id="SM01381">
    <property type="entry name" value="7TM_GPCR_Srsx"/>
    <property type="match status" value="1"/>
</dbReference>
<dbReference type="SUPFAM" id="SSF81321">
    <property type="entry name" value="Family A G protein-coupled receptor-like"/>
    <property type="match status" value="1"/>
</dbReference>
<dbReference type="PROSITE" id="PS00237">
    <property type="entry name" value="G_PROTEIN_RECEP_F1_1"/>
    <property type="match status" value="1"/>
</dbReference>
<dbReference type="PROSITE" id="PS50262">
    <property type="entry name" value="G_PROTEIN_RECEP_F1_2"/>
    <property type="match status" value="1"/>
</dbReference>
<keyword id="KW-0085">Behavior</keyword>
<keyword id="KW-1003">Cell membrane</keyword>
<keyword id="KW-1015">Disulfide bond</keyword>
<keyword id="KW-0297">G-protein coupled receptor</keyword>
<keyword id="KW-0325">Glycoprotein</keyword>
<keyword id="KW-0449">Lipoprotein</keyword>
<keyword id="KW-0472">Membrane</keyword>
<keyword id="KW-0564">Palmitate</keyword>
<keyword id="KW-0597">Phosphoprotein</keyword>
<keyword id="KW-0675">Receptor</keyword>
<keyword id="KW-1185">Reference proteome</keyword>
<keyword id="KW-0807">Transducer</keyword>
<keyword id="KW-0812">Transmembrane</keyword>
<keyword id="KW-1133">Transmembrane helix</keyword>
<evidence type="ECO:0000250" key="1">
    <source>
        <dbReference type="UniProtKB" id="P28222"/>
    </source>
</evidence>
<evidence type="ECO:0000250" key="2">
    <source>
        <dbReference type="UniProtKB" id="P41595"/>
    </source>
</evidence>
<evidence type="ECO:0000255" key="3"/>
<evidence type="ECO:0000255" key="4">
    <source>
        <dbReference type="PROSITE-ProRule" id="PRU00521"/>
    </source>
</evidence>
<evidence type="ECO:0000256" key="5">
    <source>
        <dbReference type="SAM" id="MobiDB-lite"/>
    </source>
</evidence>
<feature type="chain" id="PRO_0000068914" description="5-hydroxytryptamine receptor 1B">
    <location>
        <begin position="1"/>
        <end position="389"/>
    </location>
</feature>
<feature type="topological domain" description="Extracellular" evidence="1">
    <location>
        <begin position="1"/>
        <end position="45"/>
    </location>
</feature>
<feature type="transmembrane region" description="Helical; Name=1" evidence="1">
    <location>
        <begin position="46"/>
        <end position="71"/>
    </location>
</feature>
<feature type="topological domain" description="Cytoplasmic" evidence="1">
    <location>
        <begin position="72"/>
        <end position="85"/>
    </location>
</feature>
<feature type="transmembrane region" description="Helical; Name=2" evidence="1">
    <location>
        <begin position="86"/>
        <end position="110"/>
    </location>
</feature>
<feature type="topological domain" description="Extracellular" evidence="1">
    <location>
        <begin position="111"/>
        <end position="118"/>
    </location>
</feature>
<feature type="transmembrane region" description="Helical; Name=3" evidence="1">
    <location>
        <begin position="119"/>
        <end position="144"/>
    </location>
</feature>
<feature type="topological domain" description="Cytoplasmic" evidence="1">
    <location>
        <begin position="145"/>
        <end position="164"/>
    </location>
</feature>
<feature type="transmembrane region" description="Helical; Name=4" evidence="1">
    <location>
        <begin position="165"/>
        <end position="183"/>
    </location>
</feature>
<feature type="topological domain" description="Extracellular" evidence="1">
    <location>
        <begin position="184"/>
        <end position="204"/>
    </location>
</feature>
<feature type="transmembrane region" description="Helical; Name=5" evidence="1">
    <location>
        <begin position="205"/>
        <end position="228"/>
    </location>
</feature>
<feature type="topological domain" description="Cytoplasmic" evidence="1">
    <location>
        <begin position="229"/>
        <end position="314"/>
    </location>
</feature>
<feature type="transmembrane region" description="Helical; Name=6" evidence="1">
    <location>
        <begin position="315"/>
        <end position="336"/>
    </location>
</feature>
<feature type="topological domain" description="Extracellular" evidence="1">
    <location>
        <begin position="337"/>
        <end position="346"/>
    </location>
</feature>
<feature type="transmembrane region" description="Helical; Name=7" evidence="1">
    <location>
        <begin position="347"/>
        <end position="369"/>
    </location>
</feature>
<feature type="topological domain" description="Cytoplasmic" evidence="1">
    <location>
        <begin position="370"/>
        <end position="389"/>
    </location>
</feature>
<feature type="region of interest" description="Disordered" evidence="5">
    <location>
        <begin position="1"/>
        <end position="27"/>
    </location>
</feature>
<feature type="region of interest" description="Disordered" evidence="5">
    <location>
        <begin position="258"/>
        <end position="281"/>
    </location>
</feature>
<feature type="short sequence motif" description="DRY motif; important for ligand-induced conformation changes and signaling" evidence="2">
    <location>
        <begin position="145"/>
        <end position="147"/>
    </location>
</feature>
<feature type="short sequence motif" description="NPxxY motif; important for ligand-induced conformation changes and signaling" evidence="2">
    <location>
        <begin position="364"/>
        <end position="368"/>
    </location>
</feature>
<feature type="compositionally biased region" description="Polar residues" evidence="5">
    <location>
        <begin position="15"/>
        <end position="27"/>
    </location>
</feature>
<feature type="compositionally biased region" description="Polar residues" evidence="5">
    <location>
        <begin position="258"/>
        <end position="271"/>
    </location>
</feature>
<feature type="binding site" evidence="1">
    <location>
        <position position="128"/>
    </location>
    <ligand>
        <name>ergotamine</name>
        <dbReference type="ChEBI" id="CHEBI:190463"/>
        <note>agonist</note>
    </ligand>
</feature>
<feature type="binding site" evidence="1">
    <location>
        <position position="133"/>
    </location>
    <ligand>
        <name>ergotamine</name>
        <dbReference type="ChEBI" id="CHEBI:190463"/>
        <note>agonist</note>
    </ligand>
</feature>
<feature type="binding site" evidence="1">
    <location>
        <position position="200"/>
    </location>
    <ligand>
        <name>ergotamine</name>
        <dbReference type="ChEBI" id="CHEBI:190463"/>
        <note>agonist</note>
    </ligand>
</feature>
<feature type="site" description="Important for species-specific agonist sensitivity" evidence="1">
    <location>
        <position position="354"/>
    </location>
</feature>
<feature type="lipid moiety-binding region" description="S-palmitoyl cysteine" evidence="3">
    <location>
        <position position="387"/>
    </location>
</feature>
<feature type="glycosylation site" description="N-linked (GlcNAc...) asparagine" evidence="3">
    <location>
        <position position="24"/>
    </location>
</feature>
<feature type="glycosylation site" description="N-linked (GlcNAc...) asparagine" evidence="3">
    <location>
        <position position="31"/>
    </location>
</feature>
<feature type="disulfide bond" evidence="4">
    <location>
        <begin position="121"/>
        <end position="198"/>
    </location>
</feature>
<gene>
    <name type="primary">HTR1B</name>
</gene>